<reference key="1">
    <citation type="submission" date="1998-06" db="EMBL/GenBank/DDBJ databases">
        <title>Candida glabrata ACT1.</title>
        <authorList>
            <person name="Kurzai O."/>
            <person name="Weig M."/>
            <person name="Muhlschlegel F."/>
        </authorList>
    </citation>
    <scope>NUCLEOTIDE SEQUENCE [GENOMIC DNA]</scope>
    <source>
        <strain>ATCC 90876 / B73</strain>
    </source>
</reference>
<reference key="2">
    <citation type="journal article" date="2004" name="Nature">
        <title>Genome evolution in yeasts.</title>
        <authorList>
            <person name="Dujon B."/>
            <person name="Sherman D."/>
            <person name="Fischer G."/>
            <person name="Durrens P."/>
            <person name="Casaregola S."/>
            <person name="Lafontaine I."/>
            <person name="de Montigny J."/>
            <person name="Marck C."/>
            <person name="Neuveglise C."/>
            <person name="Talla E."/>
            <person name="Goffard N."/>
            <person name="Frangeul L."/>
            <person name="Aigle M."/>
            <person name="Anthouard V."/>
            <person name="Babour A."/>
            <person name="Barbe V."/>
            <person name="Barnay S."/>
            <person name="Blanchin S."/>
            <person name="Beckerich J.-M."/>
            <person name="Beyne E."/>
            <person name="Bleykasten C."/>
            <person name="Boisrame A."/>
            <person name="Boyer J."/>
            <person name="Cattolico L."/>
            <person name="Confanioleri F."/>
            <person name="de Daruvar A."/>
            <person name="Despons L."/>
            <person name="Fabre E."/>
            <person name="Fairhead C."/>
            <person name="Ferry-Dumazet H."/>
            <person name="Groppi A."/>
            <person name="Hantraye F."/>
            <person name="Hennequin C."/>
            <person name="Jauniaux N."/>
            <person name="Joyet P."/>
            <person name="Kachouri R."/>
            <person name="Kerrest A."/>
            <person name="Koszul R."/>
            <person name="Lemaire M."/>
            <person name="Lesur I."/>
            <person name="Ma L."/>
            <person name="Muller H."/>
            <person name="Nicaud J.-M."/>
            <person name="Nikolski M."/>
            <person name="Oztas S."/>
            <person name="Ozier-Kalogeropoulos O."/>
            <person name="Pellenz S."/>
            <person name="Potier S."/>
            <person name="Richard G.-F."/>
            <person name="Straub M.-L."/>
            <person name="Suleau A."/>
            <person name="Swennen D."/>
            <person name="Tekaia F."/>
            <person name="Wesolowski-Louvel M."/>
            <person name="Westhof E."/>
            <person name="Wirth B."/>
            <person name="Zeniou-Meyer M."/>
            <person name="Zivanovic Y."/>
            <person name="Bolotin-Fukuhara M."/>
            <person name="Thierry A."/>
            <person name="Bouchier C."/>
            <person name="Caudron B."/>
            <person name="Scarpelli C."/>
            <person name="Gaillardin C."/>
            <person name="Weissenbach J."/>
            <person name="Wincker P."/>
            <person name="Souciet J.-L."/>
        </authorList>
    </citation>
    <scope>NUCLEOTIDE SEQUENCE [LARGE SCALE GENOMIC DNA]</scope>
    <source>
        <strain>ATCC 2001 / BCRC 20586 / JCM 3761 / NBRC 0622 / NRRL Y-65 / CBS 138</strain>
    </source>
</reference>
<reference key="3">
    <citation type="journal article" date="2003" name="FEMS Yeast Res.">
        <title>Phylogenetic relationships among yeasts of the 'Saccharomyces complex' determined from multigene sequence analyses.</title>
        <authorList>
            <person name="Kurtzman C.P."/>
            <person name="Robnett C.J."/>
        </authorList>
    </citation>
    <scope>NUCLEOTIDE SEQUENCE [GENOMIC DNA] OF 43-341</scope>
    <source>
        <strain>ATCC 2001 / BCRC 20586 / JCM 3761 / NBRC 0622 / NRRL Y-65 / CBS 138</strain>
    </source>
</reference>
<dbReference type="EC" id="3.6.4.-" evidence="2"/>
<dbReference type="EMBL" id="AF069746">
    <property type="protein sequence ID" value="AAC25760.1"/>
    <property type="molecule type" value="Genomic_DNA"/>
</dbReference>
<dbReference type="EMBL" id="CR380957">
    <property type="protein sequence ID" value="CAG61731.2"/>
    <property type="molecule type" value="Genomic_DNA"/>
</dbReference>
<dbReference type="EMBL" id="AF527926">
    <property type="protein sequence ID" value="AAP57891.1"/>
    <property type="molecule type" value="Genomic_DNA"/>
</dbReference>
<dbReference type="RefSeq" id="XP_448768.2">
    <property type="nucleotide sequence ID" value="XM_448768.2"/>
</dbReference>
<dbReference type="PDB" id="8THX">
    <property type="method" value="EM"/>
    <property type="resolution" value="3.98 A"/>
    <property type="chains" value="A/B/C/D/E=6-375"/>
</dbReference>
<dbReference type="PDB" id="8THY">
    <property type="method" value="EM"/>
    <property type="resolution" value="3.84 A"/>
    <property type="chains" value="A/B/C/D/E=6-375"/>
</dbReference>
<dbReference type="PDB" id="8TI3">
    <property type="method" value="EM"/>
    <property type="resolution" value="4.43 A"/>
    <property type="chains" value="A/B/C/D/E=6-375"/>
</dbReference>
<dbReference type="PDBsum" id="8THX"/>
<dbReference type="PDBsum" id="8THY"/>
<dbReference type="PDBsum" id="8TI3"/>
<dbReference type="SMR" id="P60009"/>
<dbReference type="FunCoup" id="P60009">
    <property type="interactions" value="1579"/>
</dbReference>
<dbReference type="STRING" id="284593.P60009"/>
<dbReference type="EnsemblFungi" id="CAGL0K12694g-T">
    <property type="protein sequence ID" value="CAGL0K12694g-T-p1"/>
    <property type="gene ID" value="CAGL0K12694g"/>
</dbReference>
<dbReference type="GeneID" id="2890423"/>
<dbReference type="KEGG" id="cgr:2890423"/>
<dbReference type="CGD" id="CAL0134579">
    <property type="gene designation" value="ACT1"/>
</dbReference>
<dbReference type="VEuPathDB" id="FungiDB:B1J91_K12694g"/>
<dbReference type="VEuPathDB" id="FungiDB:CAGL0K12694g"/>
<dbReference type="eggNOG" id="KOG0676">
    <property type="taxonomic scope" value="Eukaryota"/>
</dbReference>
<dbReference type="HOGENOM" id="CLU_027965_0_2_1"/>
<dbReference type="InParanoid" id="P60009"/>
<dbReference type="OMA" id="FHTTAER"/>
<dbReference type="Proteomes" id="UP000002428">
    <property type="component" value="Chromosome K"/>
</dbReference>
<dbReference type="GO" id="GO:0030479">
    <property type="term" value="C:actin cortical patch"/>
    <property type="evidence" value="ECO:0007669"/>
    <property type="project" value="EnsemblFungi"/>
</dbReference>
<dbReference type="GO" id="GO:0005884">
    <property type="term" value="C:actin filament"/>
    <property type="evidence" value="ECO:0007669"/>
    <property type="project" value="EnsemblFungi"/>
</dbReference>
<dbReference type="GO" id="GO:0032432">
    <property type="term" value="C:actin filament bundle"/>
    <property type="evidence" value="ECO:0007669"/>
    <property type="project" value="EnsemblFungi"/>
</dbReference>
<dbReference type="GO" id="GO:0000142">
    <property type="term" value="C:cellular bud neck contractile ring"/>
    <property type="evidence" value="ECO:0007669"/>
    <property type="project" value="EnsemblFungi"/>
</dbReference>
<dbReference type="GO" id="GO:0005829">
    <property type="term" value="C:cytosol"/>
    <property type="evidence" value="ECO:0000314"/>
    <property type="project" value="CGD"/>
</dbReference>
<dbReference type="GO" id="GO:0005576">
    <property type="term" value="C:extracellular region"/>
    <property type="evidence" value="ECO:0000314"/>
    <property type="project" value="CGD"/>
</dbReference>
<dbReference type="GO" id="GO:0062040">
    <property type="term" value="C:fungal biofilm matrix"/>
    <property type="evidence" value="ECO:0000314"/>
    <property type="project" value="CGD"/>
</dbReference>
<dbReference type="GO" id="GO:0031011">
    <property type="term" value="C:Ino80 complex"/>
    <property type="evidence" value="ECO:0007669"/>
    <property type="project" value="EnsemblFungi"/>
</dbReference>
<dbReference type="GO" id="GO:0035267">
    <property type="term" value="C:NuA4 histone acetyltransferase complex"/>
    <property type="evidence" value="ECO:0007669"/>
    <property type="project" value="EnsemblFungi"/>
</dbReference>
<dbReference type="GO" id="GO:0000812">
    <property type="term" value="C:Swr1 complex"/>
    <property type="evidence" value="ECO:0007669"/>
    <property type="project" value="EnsemblFungi"/>
</dbReference>
<dbReference type="GO" id="GO:0005524">
    <property type="term" value="F:ATP binding"/>
    <property type="evidence" value="ECO:0007669"/>
    <property type="project" value="UniProtKB-KW"/>
</dbReference>
<dbReference type="GO" id="GO:0016887">
    <property type="term" value="F:ATP hydrolysis activity"/>
    <property type="evidence" value="ECO:0007669"/>
    <property type="project" value="EnsemblFungi"/>
</dbReference>
<dbReference type="GO" id="GO:0042802">
    <property type="term" value="F:identical protein binding"/>
    <property type="evidence" value="ECO:0007669"/>
    <property type="project" value="EnsemblFungi"/>
</dbReference>
<dbReference type="GO" id="GO:0005200">
    <property type="term" value="F:structural constituent of cytoskeleton"/>
    <property type="evidence" value="ECO:0007669"/>
    <property type="project" value="EnsemblFungi"/>
</dbReference>
<dbReference type="GO" id="GO:0030476">
    <property type="term" value="P:ascospore wall assembly"/>
    <property type="evidence" value="ECO:0007669"/>
    <property type="project" value="EnsemblFungi"/>
</dbReference>
<dbReference type="GO" id="GO:0006338">
    <property type="term" value="P:chromatin remodeling"/>
    <property type="evidence" value="ECO:0007669"/>
    <property type="project" value="EnsemblFungi"/>
</dbReference>
<dbReference type="GO" id="GO:0006281">
    <property type="term" value="P:DNA repair"/>
    <property type="evidence" value="ECO:0007669"/>
    <property type="project" value="EnsemblFungi"/>
</dbReference>
<dbReference type="GO" id="GO:0006897">
    <property type="term" value="P:endocytosis"/>
    <property type="evidence" value="ECO:0007669"/>
    <property type="project" value="EnsemblFungi"/>
</dbReference>
<dbReference type="GO" id="GO:0030010">
    <property type="term" value="P:establishment of cell polarity"/>
    <property type="evidence" value="ECO:0007669"/>
    <property type="project" value="EnsemblFungi"/>
</dbReference>
<dbReference type="GO" id="GO:1902404">
    <property type="term" value="P:mitotic actomyosin contractile ring contraction"/>
    <property type="evidence" value="ECO:0007669"/>
    <property type="project" value="EnsemblFungi"/>
</dbReference>
<dbReference type="GO" id="GO:0009306">
    <property type="term" value="P:protein secretion"/>
    <property type="evidence" value="ECO:0007669"/>
    <property type="project" value="EnsemblFungi"/>
</dbReference>
<dbReference type="GO" id="GO:0000011">
    <property type="term" value="P:vacuole inheritance"/>
    <property type="evidence" value="ECO:0007669"/>
    <property type="project" value="EnsemblFungi"/>
</dbReference>
<dbReference type="CDD" id="cd10224">
    <property type="entry name" value="ASKHA_NBD_actin"/>
    <property type="match status" value="1"/>
</dbReference>
<dbReference type="FunFam" id="3.30.420.40:FF:000148">
    <property type="entry name" value="Actin, alpha skeletal muscle"/>
    <property type="match status" value="1"/>
</dbReference>
<dbReference type="FunFam" id="3.90.640.10:FF:000001">
    <property type="entry name" value="Actin, muscle"/>
    <property type="match status" value="1"/>
</dbReference>
<dbReference type="FunFam" id="3.30.420.40:FF:000404">
    <property type="entry name" value="Major actin"/>
    <property type="match status" value="1"/>
</dbReference>
<dbReference type="FunFam" id="3.30.420.40:FF:000058">
    <property type="entry name" value="Putative actin-related protein 5"/>
    <property type="match status" value="1"/>
</dbReference>
<dbReference type="Gene3D" id="3.30.420.40">
    <property type="match status" value="2"/>
</dbReference>
<dbReference type="Gene3D" id="3.90.640.10">
    <property type="entry name" value="Actin, Chain A, domain 4"/>
    <property type="match status" value="1"/>
</dbReference>
<dbReference type="InterPro" id="IPR004000">
    <property type="entry name" value="Actin"/>
</dbReference>
<dbReference type="InterPro" id="IPR020902">
    <property type="entry name" value="Actin/actin-like_CS"/>
</dbReference>
<dbReference type="InterPro" id="IPR004001">
    <property type="entry name" value="Actin_CS"/>
</dbReference>
<dbReference type="InterPro" id="IPR043129">
    <property type="entry name" value="ATPase_NBD"/>
</dbReference>
<dbReference type="PANTHER" id="PTHR11937">
    <property type="entry name" value="ACTIN"/>
    <property type="match status" value="1"/>
</dbReference>
<dbReference type="Pfam" id="PF00022">
    <property type="entry name" value="Actin"/>
    <property type="match status" value="1"/>
</dbReference>
<dbReference type="PRINTS" id="PR00190">
    <property type="entry name" value="ACTIN"/>
</dbReference>
<dbReference type="SMART" id="SM00268">
    <property type="entry name" value="ACTIN"/>
    <property type="match status" value="1"/>
</dbReference>
<dbReference type="SUPFAM" id="SSF53067">
    <property type="entry name" value="Actin-like ATPase domain"/>
    <property type="match status" value="2"/>
</dbReference>
<dbReference type="PROSITE" id="PS00406">
    <property type="entry name" value="ACTINS_1"/>
    <property type="match status" value="1"/>
</dbReference>
<dbReference type="PROSITE" id="PS00432">
    <property type="entry name" value="ACTINS_2"/>
    <property type="match status" value="1"/>
</dbReference>
<dbReference type="PROSITE" id="PS01132">
    <property type="entry name" value="ACTINS_ACT_LIKE"/>
    <property type="match status" value="1"/>
</dbReference>
<protein>
    <recommendedName>
        <fullName>Actin</fullName>
        <ecNumber evidence="2">3.6.4.-</ecNumber>
    </recommendedName>
</protein>
<proteinExistence type="evidence at protein level"/>
<evidence type="ECO:0000250" key="1"/>
<evidence type="ECO:0000250" key="2">
    <source>
        <dbReference type="UniProtKB" id="P60010"/>
    </source>
</evidence>
<evidence type="ECO:0000305" key="3"/>
<sequence length="375" mass="41690">MDSEVAALVIDNGSGMCKAGFAGDDAPRAVFPSIVGRPRHQGIMVGMGQKDSYVGDEAQSKRGILTLRYPIEHGIVTNWDDMEKIWHHTFYNELRVAPEEHPVLLTEAPMNPKSNREKMTQIMFETFNVPAFYVSIQAVLSLYSSGRTTGIVLDSGDGVTHVVPIYAGFSLPHAILRIDLAGRDLTDYLMKILSERGYSFSTTAEREIVRDIKEKLCYVALDFEQEMQTAAQSSSIEKSYELPDGQVITIGNERFRAPEALFHPSVLGLESAGIDQTTYNSIMKCDVDVRKELYGNIVMSGGTTMFPGIAERMQKEITALAPSSMKVKIIAPPERKYSVWIGGSILASLTTFQQMWISKQEYDESGPSIVHHKCF</sequence>
<comment type="function">
    <text>Actins are highly conserved proteins that are involved in various types of cell motility and are ubiquitously expressed in all eukaryotic cells.</text>
</comment>
<comment type="catalytic activity">
    <reaction evidence="2">
        <text>ATP + H2O = ADP + phosphate + H(+)</text>
        <dbReference type="Rhea" id="RHEA:13065"/>
        <dbReference type="ChEBI" id="CHEBI:15377"/>
        <dbReference type="ChEBI" id="CHEBI:15378"/>
        <dbReference type="ChEBI" id="CHEBI:30616"/>
        <dbReference type="ChEBI" id="CHEBI:43474"/>
        <dbReference type="ChEBI" id="CHEBI:456216"/>
    </reaction>
</comment>
<comment type="subcellular location">
    <subcellularLocation>
        <location>Cytoplasm</location>
        <location>Cytoskeleton</location>
    </subcellularLocation>
</comment>
<comment type="similarity">
    <text evidence="3">Belongs to the actin family.</text>
</comment>
<gene>
    <name type="primary">ACT1</name>
    <name type="ordered locus">CAGL0K12694g</name>
</gene>
<accession>P60009</accession>
<accession>P02579</accession>
<accession>Q6FLX6</accession>
<accession>Q7Z9T8</accession>
<name>ACT_CANGA</name>
<keyword id="KW-0002">3D-structure</keyword>
<keyword id="KW-0007">Acetylation</keyword>
<keyword id="KW-0067">ATP-binding</keyword>
<keyword id="KW-0963">Cytoplasm</keyword>
<keyword id="KW-0206">Cytoskeleton</keyword>
<keyword id="KW-0378">Hydrolase</keyword>
<keyword id="KW-0547">Nucleotide-binding</keyword>
<keyword id="KW-1185">Reference proteome</keyword>
<organism>
    <name type="scientific">Candida glabrata (strain ATCC 2001 / BCRC 20586 / JCM 3761 / NBRC 0622 / NRRL Y-65 / CBS 138)</name>
    <name type="common">Yeast</name>
    <name type="synonym">Nakaseomyces glabratus</name>
    <dbReference type="NCBI Taxonomy" id="284593"/>
    <lineage>
        <taxon>Eukaryota</taxon>
        <taxon>Fungi</taxon>
        <taxon>Dikarya</taxon>
        <taxon>Ascomycota</taxon>
        <taxon>Saccharomycotina</taxon>
        <taxon>Saccharomycetes</taxon>
        <taxon>Saccharomycetales</taxon>
        <taxon>Saccharomycetaceae</taxon>
        <taxon>Nakaseomyces</taxon>
    </lineage>
</organism>
<feature type="chain" id="PRO_0000088905" description="Actin">
    <location>
        <begin position="1"/>
        <end position="375"/>
    </location>
</feature>
<feature type="modified residue" description="N-acetylmethionine" evidence="1">
    <location>
        <position position="1"/>
    </location>
</feature>